<gene>
    <name evidence="1" type="primary">nfo</name>
    <name type="ordered locus">SF2244</name>
    <name type="ordered locus">S2373</name>
</gene>
<organism>
    <name type="scientific">Shigella flexneri</name>
    <dbReference type="NCBI Taxonomy" id="623"/>
    <lineage>
        <taxon>Bacteria</taxon>
        <taxon>Pseudomonadati</taxon>
        <taxon>Pseudomonadota</taxon>
        <taxon>Gammaproteobacteria</taxon>
        <taxon>Enterobacterales</taxon>
        <taxon>Enterobacteriaceae</taxon>
        <taxon>Shigella</taxon>
    </lineage>
</organism>
<dbReference type="EC" id="3.1.21.2" evidence="1"/>
<dbReference type="EMBL" id="AE005674">
    <property type="protein sequence ID" value="AAN43763.1"/>
    <property type="molecule type" value="Genomic_DNA"/>
</dbReference>
<dbReference type="EMBL" id="AE014073">
    <property type="protein sequence ID" value="AAP17580.1"/>
    <property type="molecule type" value="Genomic_DNA"/>
</dbReference>
<dbReference type="RefSeq" id="NP_708056.1">
    <property type="nucleotide sequence ID" value="NC_004337.2"/>
</dbReference>
<dbReference type="RefSeq" id="WP_000873892.1">
    <property type="nucleotide sequence ID" value="NZ_WPGW01000017.1"/>
</dbReference>
<dbReference type="SMR" id="Q83QW6"/>
<dbReference type="STRING" id="198214.SF2244"/>
<dbReference type="PaxDb" id="198214-SF2244"/>
<dbReference type="GeneID" id="1025424"/>
<dbReference type="KEGG" id="sfl:SF2244"/>
<dbReference type="KEGG" id="sfx:S2373"/>
<dbReference type="PATRIC" id="fig|198214.7.peg.2689"/>
<dbReference type="HOGENOM" id="CLU_025885_0_4_6"/>
<dbReference type="Proteomes" id="UP000001006">
    <property type="component" value="Chromosome"/>
</dbReference>
<dbReference type="Proteomes" id="UP000002673">
    <property type="component" value="Chromosome"/>
</dbReference>
<dbReference type="GO" id="GO:0008833">
    <property type="term" value="F:deoxyribonuclease IV (phage-T4-induced) activity"/>
    <property type="evidence" value="ECO:0007669"/>
    <property type="project" value="UniProtKB-UniRule"/>
</dbReference>
<dbReference type="GO" id="GO:0003677">
    <property type="term" value="F:DNA binding"/>
    <property type="evidence" value="ECO:0007669"/>
    <property type="project" value="InterPro"/>
</dbReference>
<dbReference type="GO" id="GO:0003906">
    <property type="term" value="F:DNA-(apurinic or apyrimidinic site) endonuclease activity"/>
    <property type="evidence" value="ECO:0007669"/>
    <property type="project" value="TreeGrafter"/>
</dbReference>
<dbReference type="GO" id="GO:0008081">
    <property type="term" value="F:phosphoric diester hydrolase activity"/>
    <property type="evidence" value="ECO:0007669"/>
    <property type="project" value="TreeGrafter"/>
</dbReference>
<dbReference type="GO" id="GO:0008270">
    <property type="term" value="F:zinc ion binding"/>
    <property type="evidence" value="ECO:0007669"/>
    <property type="project" value="UniProtKB-UniRule"/>
</dbReference>
<dbReference type="GO" id="GO:0006284">
    <property type="term" value="P:base-excision repair"/>
    <property type="evidence" value="ECO:0007669"/>
    <property type="project" value="TreeGrafter"/>
</dbReference>
<dbReference type="CDD" id="cd00019">
    <property type="entry name" value="AP2Ec"/>
    <property type="match status" value="1"/>
</dbReference>
<dbReference type="FunFam" id="3.20.20.150:FF:000001">
    <property type="entry name" value="Probable endonuclease 4"/>
    <property type="match status" value="1"/>
</dbReference>
<dbReference type="Gene3D" id="3.20.20.150">
    <property type="entry name" value="Divalent-metal-dependent TIM barrel enzymes"/>
    <property type="match status" value="1"/>
</dbReference>
<dbReference type="HAMAP" id="MF_00152">
    <property type="entry name" value="Nfo"/>
    <property type="match status" value="1"/>
</dbReference>
<dbReference type="InterPro" id="IPR001719">
    <property type="entry name" value="AP_endonuc_2"/>
</dbReference>
<dbReference type="InterPro" id="IPR018246">
    <property type="entry name" value="AP_endonuc_F2_Zn_BS"/>
</dbReference>
<dbReference type="InterPro" id="IPR036237">
    <property type="entry name" value="Xyl_isomerase-like_sf"/>
</dbReference>
<dbReference type="InterPro" id="IPR013022">
    <property type="entry name" value="Xyl_isomerase-like_TIM-brl"/>
</dbReference>
<dbReference type="NCBIfam" id="TIGR00587">
    <property type="entry name" value="nfo"/>
    <property type="match status" value="1"/>
</dbReference>
<dbReference type="NCBIfam" id="NF002199">
    <property type="entry name" value="PRK01060.1-4"/>
    <property type="match status" value="1"/>
</dbReference>
<dbReference type="PANTHER" id="PTHR21445:SF0">
    <property type="entry name" value="APURINIC-APYRIMIDINIC ENDONUCLEASE"/>
    <property type="match status" value="1"/>
</dbReference>
<dbReference type="PANTHER" id="PTHR21445">
    <property type="entry name" value="ENDONUCLEASE IV ENDODEOXYRIBONUCLEASE IV"/>
    <property type="match status" value="1"/>
</dbReference>
<dbReference type="Pfam" id="PF01261">
    <property type="entry name" value="AP_endonuc_2"/>
    <property type="match status" value="1"/>
</dbReference>
<dbReference type="SMART" id="SM00518">
    <property type="entry name" value="AP2Ec"/>
    <property type="match status" value="1"/>
</dbReference>
<dbReference type="SUPFAM" id="SSF51658">
    <property type="entry name" value="Xylose isomerase-like"/>
    <property type="match status" value="1"/>
</dbReference>
<dbReference type="PROSITE" id="PS00729">
    <property type="entry name" value="AP_NUCLEASE_F2_1"/>
    <property type="match status" value="1"/>
</dbReference>
<dbReference type="PROSITE" id="PS00730">
    <property type="entry name" value="AP_NUCLEASE_F2_2"/>
    <property type="match status" value="1"/>
</dbReference>
<dbReference type="PROSITE" id="PS00731">
    <property type="entry name" value="AP_NUCLEASE_F2_3"/>
    <property type="match status" value="1"/>
</dbReference>
<dbReference type="PROSITE" id="PS51432">
    <property type="entry name" value="AP_NUCLEASE_F2_4"/>
    <property type="match status" value="1"/>
</dbReference>
<keyword id="KW-0227">DNA damage</keyword>
<keyword id="KW-0234">DNA repair</keyword>
<keyword id="KW-0255">Endonuclease</keyword>
<keyword id="KW-0378">Hydrolase</keyword>
<keyword id="KW-0479">Metal-binding</keyword>
<keyword id="KW-0540">Nuclease</keyword>
<keyword id="KW-1185">Reference proteome</keyword>
<keyword id="KW-0862">Zinc</keyword>
<sequence>MKYIGAHVSAAGGLANAAIRAAEIDATAFALFTKNQRQWRAAPLTTQTIDEFKAACEKYHYTSAQILPHDSYLINLGHPVTEALEKSRDAFIDEMQRCEQLGLSLLNFHPGSHLMQISEEDCLARIAESINIALDKTQGVTAVIENTAGQGSNLGFKFEHLAAIIDGVEDKSRVGVCIDTCHAFAAGYDLRTPAECEKTFADFARIVGFKYLRGMHLNDAKSTFGSRVDRHHSLGEGNIGHDAFRWIMQNDRFDGIPLILETINPDIWAEEIAWLKAQQTEKAVA</sequence>
<accession>Q83QW6</accession>
<name>END4_SHIFL</name>
<comment type="function">
    <text evidence="1">Endonuclease IV plays a role in DNA repair. It cleaves phosphodiester bonds at apurinic or apyrimidinic (AP) sites, generating a 3'-hydroxyl group and a 5'-terminal sugar phosphate.</text>
</comment>
<comment type="catalytic activity">
    <reaction evidence="1">
        <text>Endonucleolytic cleavage to 5'-phosphooligonucleotide end-products.</text>
        <dbReference type="EC" id="3.1.21.2"/>
    </reaction>
</comment>
<comment type="cofactor">
    <cofactor evidence="1">
        <name>Zn(2+)</name>
        <dbReference type="ChEBI" id="CHEBI:29105"/>
    </cofactor>
    <text evidence="1">Binds 3 Zn(2+) ions.</text>
</comment>
<comment type="similarity">
    <text evidence="1">Belongs to the AP endonuclease 2 family.</text>
</comment>
<reference key="1">
    <citation type="journal article" date="2002" name="Nucleic Acids Res.">
        <title>Genome sequence of Shigella flexneri 2a: insights into pathogenicity through comparison with genomes of Escherichia coli K12 and O157.</title>
        <authorList>
            <person name="Jin Q."/>
            <person name="Yuan Z."/>
            <person name="Xu J."/>
            <person name="Wang Y."/>
            <person name="Shen Y."/>
            <person name="Lu W."/>
            <person name="Wang J."/>
            <person name="Liu H."/>
            <person name="Yang J."/>
            <person name="Yang F."/>
            <person name="Zhang X."/>
            <person name="Zhang J."/>
            <person name="Yang G."/>
            <person name="Wu H."/>
            <person name="Qu D."/>
            <person name="Dong J."/>
            <person name="Sun L."/>
            <person name="Xue Y."/>
            <person name="Zhao A."/>
            <person name="Gao Y."/>
            <person name="Zhu J."/>
            <person name="Kan B."/>
            <person name="Ding K."/>
            <person name="Chen S."/>
            <person name="Cheng H."/>
            <person name="Yao Z."/>
            <person name="He B."/>
            <person name="Chen R."/>
            <person name="Ma D."/>
            <person name="Qiang B."/>
            <person name="Wen Y."/>
            <person name="Hou Y."/>
            <person name="Yu J."/>
        </authorList>
    </citation>
    <scope>NUCLEOTIDE SEQUENCE [LARGE SCALE GENOMIC DNA]</scope>
    <source>
        <strain>301 / Serotype 2a</strain>
    </source>
</reference>
<reference key="2">
    <citation type="journal article" date="2003" name="Infect. Immun.">
        <title>Complete genome sequence and comparative genomics of Shigella flexneri serotype 2a strain 2457T.</title>
        <authorList>
            <person name="Wei J."/>
            <person name="Goldberg M.B."/>
            <person name="Burland V."/>
            <person name="Venkatesan M.M."/>
            <person name="Deng W."/>
            <person name="Fournier G."/>
            <person name="Mayhew G.F."/>
            <person name="Plunkett G. III"/>
            <person name="Rose D.J."/>
            <person name="Darling A."/>
            <person name="Mau B."/>
            <person name="Perna N.T."/>
            <person name="Payne S.M."/>
            <person name="Runyen-Janecky L.J."/>
            <person name="Zhou S."/>
            <person name="Schwartz D.C."/>
            <person name="Blattner F.R."/>
        </authorList>
    </citation>
    <scope>NUCLEOTIDE SEQUENCE [LARGE SCALE GENOMIC DNA]</scope>
    <source>
        <strain>ATCC 700930 / 2457T / Serotype 2a</strain>
    </source>
</reference>
<feature type="chain" id="PRO_0000190868" description="Probable endonuclease 4">
    <location>
        <begin position="1"/>
        <end position="285"/>
    </location>
</feature>
<feature type="binding site" evidence="1">
    <location>
        <position position="69"/>
    </location>
    <ligand>
        <name>Zn(2+)</name>
        <dbReference type="ChEBI" id="CHEBI:29105"/>
        <label>1</label>
    </ligand>
</feature>
<feature type="binding site" evidence="1">
    <location>
        <position position="109"/>
    </location>
    <ligand>
        <name>Zn(2+)</name>
        <dbReference type="ChEBI" id="CHEBI:29105"/>
        <label>1</label>
    </ligand>
</feature>
<feature type="binding site" evidence="1">
    <location>
        <position position="145"/>
    </location>
    <ligand>
        <name>Zn(2+)</name>
        <dbReference type="ChEBI" id="CHEBI:29105"/>
        <label>1</label>
    </ligand>
</feature>
<feature type="binding site" evidence="1">
    <location>
        <position position="145"/>
    </location>
    <ligand>
        <name>Zn(2+)</name>
        <dbReference type="ChEBI" id="CHEBI:29105"/>
        <label>2</label>
    </ligand>
</feature>
<feature type="binding site" evidence="1">
    <location>
        <position position="179"/>
    </location>
    <ligand>
        <name>Zn(2+)</name>
        <dbReference type="ChEBI" id="CHEBI:29105"/>
        <label>2</label>
    </ligand>
</feature>
<feature type="binding site" evidence="1">
    <location>
        <position position="182"/>
    </location>
    <ligand>
        <name>Zn(2+)</name>
        <dbReference type="ChEBI" id="CHEBI:29105"/>
        <label>3</label>
    </ligand>
</feature>
<feature type="binding site" evidence="1">
    <location>
        <position position="216"/>
    </location>
    <ligand>
        <name>Zn(2+)</name>
        <dbReference type="ChEBI" id="CHEBI:29105"/>
        <label>2</label>
    </ligand>
</feature>
<feature type="binding site" evidence="1">
    <location>
        <position position="229"/>
    </location>
    <ligand>
        <name>Zn(2+)</name>
        <dbReference type="ChEBI" id="CHEBI:29105"/>
        <label>3</label>
    </ligand>
</feature>
<feature type="binding site" evidence="1">
    <location>
        <position position="231"/>
    </location>
    <ligand>
        <name>Zn(2+)</name>
        <dbReference type="ChEBI" id="CHEBI:29105"/>
        <label>3</label>
    </ligand>
</feature>
<feature type="binding site" evidence="1">
    <location>
        <position position="261"/>
    </location>
    <ligand>
        <name>Zn(2+)</name>
        <dbReference type="ChEBI" id="CHEBI:29105"/>
        <label>2</label>
    </ligand>
</feature>
<evidence type="ECO:0000255" key="1">
    <source>
        <dbReference type="HAMAP-Rule" id="MF_00152"/>
    </source>
</evidence>
<protein>
    <recommendedName>
        <fullName evidence="1">Probable endonuclease 4</fullName>
        <ecNumber evidence="1">3.1.21.2</ecNumber>
    </recommendedName>
    <alternativeName>
        <fullName evidence="1">Endodeoxyribonuclease IV</fullName>
    </alternativeName>
    <alternativeName>
        <fullName evidence="1">Endonuclease IV</fullName>
    </alternativeName>
</protein>
<proteinExistence type="inferred from homology"/>